<reference key="1">
    <citation type="journal article" date="2006" name="J. Bacteriol.">
        <title>Complete genome sequence of Yersinia pestis strains Antiqua and Nepal516: evidence of gene reduction in an emerging pathogen.</title>
        <authorList>
            <person name="Chain P.S.G."/>
            <person name="Hu P."/>
            <person name="Malfatti S.A."/>
            <person name="Radnedge L."/>
            <person name="Larimer F."/>
            <person name="Vergez L.M."/>
            <person name="Worsham P."/>
            <person name="Chu M.C."/>
            <person name="Andersen G.L."/>
        </authorList>
    </citation>
    <scope>NUCLEOTIDE SEQUENCE [LARGE SCALE GENOMIC DNA]</scope>
    <source>
        <strain>Antiqua</strain>
    </source>
</reference>
<proteinExistence type="inferred from homology"/>
<comment type="function">
    <text evidence="1">Involved in the anomeric conversion of L-rhamnose.</text>
</comment>
<comment type="catalytic activity">
    <reaction evidence="1">
        <text>alpha-L-rhamnose = beta-L-rhamnose</text>
        <dbReference type="Rhea" id="RHEA:25584"/>
        <dbReference type="ChEBI" id="CHEBI:27586"/>
        <dbReference type="ChEBI" id="CHEBI:27907"/>
        <dbReference type="EC" id="5.1.3.32"/>
    </reaction>
</comment>
<comment type="pathway">
    <text evidence="1">Carbohydrate metabolism; L-rhamnose metabolism.</text>
</comment>
<comment type="subunit">
    <text evidence="1">Homodimer.</text>
</comment>
<comment type="subcellular location">
    <subcellularLocation>
        <location evidence="1">Cytoplasm</location>
    </subcellularLocation>
</comment>
<comment type="similarity">
    <text evidence="1">Belongs to the rhamnose mutarotase family.</text>
</comment>
<keyword id="KW-0119">Carbohydrate metabolism</keyword>
<keyword id="KW-0963">Cytoplasm</keyword>
<keyword id="KW-0413">Isomerase</keyword>
<keyword id="KW-0684">Rhamnose metabolism</keyword>
<dbReference type="EC" id="5.1.3.32" evidence="1"/>
<dbReference type="EMBL" id="CP000308">
    <property type="protein sequence ID" value="ABG15920.1"/>
    <property type="molecule type" value="Genomic_DNA"/>
</dbReference>
<dbReference type="PIR" id="AH0040">
    <property type="entry name" value="AH0040"/>
</dbReference>
<dbReference type="RefSeq" id="WP_002209101.1">
    <property type="nucleotide sequence ID" value="NZ_CP009906.1"/>
</dbReference>
<dbReference type="SMR" id="Q1C0V2"/>
<dbReference type="GeneID" id="57974279"/>
<dbReference type="KEGG" id="ypa:YPA_3959"/>
<dbReference type="UniPathway" id="UPA00125"/>
<dbReference type="Proteomes" id="UP000001971">
    <property type="component" value="Chromosome"/>
</dbReference>
<dbReference type="GO" id="GO:0005737">
    <property type="term" value="C:cytoplasm"/>
    <property type="evidence" value="ECO:0007669"/>
    <property type="project" value="UniProtKB-SubCell"/>
</dbReference>
<dbReference type="GO" id="GO:0062192">
    <property type="term" value="F:L-rhamnose mutarotase activity"/>
    <property type="evidence" value="ECO:0007669"/>
    <property type="project" value="UniProtKB-EC"/>
</dbReference>
<dbReference type="GO" id="GO:0019301">
    <property type="term" value="P:rhamnose catabolic process"/>
    <property type="evidence" value="ECO:0007669"/>
    <property type="project" value="TreeGrafter"/>
</dbReference>
<dbReference type="Gene3D" id="3.30.70.100">
    <property type="match status" value="1"/>
</dbReference>
<dbReference type="HAMAP" id="MF_01663">
    <property type="entry name" value="L_rham_rotase"/>
    <property type="match status" value="1"/>
</dbReference>
<dbReference type="InterPro" id="IPR011008">
    <property type="entry name" value="Dimeric_a/b-barrel"/>
</dbReference>
<dbReference type="InterPro" id="IPR013448">
    <property type="entry name" value="L-rhamnose_mutarotase"/>
</dbReference>
<dbReference type="InterPro" id="IPR008000">
    <property type="entry name" value="Rham/fucose_mutarotase"/>
</dbReference>
<dbReference type="NCBIfam" id="TIGR02625">
    <property type="entry name" value="YiiL_rotase"/>
    <property type="match status" value="1"/>
</dbReference>
<dbReference type="PANTHER" id="PTHR34389">
    <property type="entry name" value="L-RHAMNOSE MUTAROTASE"/>
    <property type="match status" value="1"/>
</dbReference>
<dbReference type="PANTHER" id="PTHR34389:SF2">
    <property type="entry name" value="L-RHAMNOSE MUTAROTASE"/>
    <property type="match status" value="1"/>
</dbReference>
<dbReference type="Pfam" id="PF05336">
    <property type="entry name" value="rhaM"/>
    <property type="match status" value="1"/>
</dbReference>
<dbReference type="SUPFAM" id="SSF54909">
    <property type="entry name" value="Dimeric alpha+beta barrel"/>
    <property type="match status" value="1"/>
</dbReference>
<gene>
    <name evidence="1" type="primary">rhaM</name>
    <name type="ordered locus">YPA_3959</name>
</gene>
<name>RHAM_YERPA</name>
<protein>
    <recommendedName>
        <fullName evidence="1">L-rhamnose mutarotase</fullName>
        <ecNumber evidence="1">5.1.3.32</ecNumber>
    </recommendedName>
    <alternativeName>
        <fullName evidence="1">Rhamnose 1-epimerase</fullName>
    </alternativeName>
    <alternativeName>
        <fullName evidence="1">Type-3 mutarotase</fullName>
    </alternativeName>
</protein>
<sequence>MIRKAFVMAVNPDAHAEYQRRHTPIWPELESVLKAHGAHHYSIFLDETRNLLFGVVEIESEERWNAVAQTAECQRWWQHMADVMPSHPDNSPVSQALREVFYLE</sequence>
<accession>Q1C0V2</accession>
<evidence type="ECO:0000255" key="1">
    <source>
        <dbReference type="HAMAP-Rule" id="MF_01663"/>
    </source>
</evidence>
<organism>
    <name type="scientific">Yersinia pestis bv. Antiqua (strain Antiqua)</name>
    <dbReference type="NCBI Taxonomy" id="360102"/>
    <lineage>
        <taxon>Bacteria</taxon>
        <taxon>Pseudomonadati</taxon>
        <taxon>Pseudomonadota</taxon>
        <taxon>Gammaproteobacteria</taxon>
        <taxon>Enterobacterales</taxon>
        <taxon>Yersiniaceae</taxon>
        <taxon>Yersinia</taxon>
    </lineage>
</organism>
<feature type="chain" id="PRO_0000344614" description="L-rhamnose mutarotase">
    <location>
        <begin position="1"/>
        <end position="104"/>
    </location>
</feature>
<feature type="active site" description="Proton donor" evidence="1">
    <location>
        <position position="22"/>
    </location>
</feature>
<feature type="binding site" evidence="1">
    <location>
        <position position="18"/>
    </location>
    <ligand>
        <name>substrate</name>
    </ligand>
</feature>
<feature type="binding site" evidence="1">
    <location>
        <position position="41"/>
    </location>
    <ligand>
        <name>substrate</name>
    </ligand>
</feature>
<feature type="binding site" evidence="1">
    <location>
        <begin position="76"/>
        <end position="77"/>
    </location>
    <ligand>
        <name>substrate</name>
    </ligand>
</feature>